<keyword id="KW-1185">Reference proteome</keyword>
<reference key="1">
    <citation type="journal article" date="2009" name="PLoS ONE">
        <title>The complete genome of Teredinibacter turnerae T7901: an intracellular endosymbiont of marine wood-boring bivalves (shipworms).</title>
        <authorList>
            <person name="Yang J.C."/>
            <person name="Madupu R."/>
            <person name="Durkin A.S."/>
            <person name="Ekborg N.A."/>
            <person name="Pedamallu C.S."/>
            <person name="Hostetler J.B."/>
            <person name="Radune D."/>
            <person name="Toms B.S."/>
            <person name="Henrissat B."/>
            <person name="Coutinho P.M."/>
            <person name="Schwarz S."/>
            <person name="Field L."/>
            <person name="Trindade-Silva A.E."/>
            <person name="Soares C.A.G."/>
            <person name="Elshahawi S."/>
            <person name="Hanora A."/>
            <person name="Schmidt E.W."/>
            <person name="Haygood M.G."/>
            <person name="Posfai J."/>
            <person name="Benner J."/>
            <person name="Madinger C."/>
            <person name="Nove J."/>
            <person name="Anton B."/>
            <person name="Chaudhary K."/>
            <person name="Foster J."/>
            <person name="Holman A."/>
            <person name="Kumar S."/>
            <person name="Lessard P.A."/>
            <person name="Luyten Y.A."/>
            <person name="Slatko B."/>
            <person name="Wood N."/>
            <person name="Wu B."/>
            <person name="Teplitski M."/>
            <person name="Mougous J.D."/>
            <person name="Ward N."/>
            <person name="Eisen J.A."/>
            <person name="Badger J.H."/>
            <person name="Distel D.L."/>
        </authorList>
    </citation>
    <scope>NUCLEOTIDE SEQUENCE [LARGE SCALE GENOMIC DNA]</scope>
    <source>
        <strain>ATCC 39867 / T7901</strain>
    </source>
</reference>
<organism>
    <name type="scientific">Teredinibacter turnerae (strain ATCC 39867 / T7901)</name>
    <dbReference type="NCBI Taxonomy" id="377629"/>
    <lineage>
        <taxon>Bacteria</taxon>
        <taxon>Pseudomonadati</taxon>
        <taxon>Pseudomonadota</taxon>
        <taxon>Gammaproteobacteria</taxon>
        <taxon>Cellvibrionales</taxon>
        <taxon>Cellvibrionaceae</taxon>
        <taxon>Teredinibacter</taxon>
    </lineage>
</organism>
<feature type="chain" id="PRO_1000212432" description="UPF0246 protein TERTU_4575">
    <location>
        <begin position="1"/>
        <end position="256"/>
    </location>
</feature>
<comment type="similarity">
    <text evidence="1">Belongs to the UPF0246 family.</text>
</comment>
<sequence length="256" mass="28965">MLIVISPAKNLDYDSPVPTAKSTKAALLDDASELMDGLKTLAPQDVSQLMGISDKLGLLNYDRFQDWQLPLTKKNARQALLAFKGDVYVGLDAYNFSAEDFDFAQQHLRILSGLYGVLKPLDLVAPYRLEMGTRFANDRGKDLYAFWGDKVTAELNKPIKKLASNTLINLASNEYFKSVKPAHLQAQIITPVFKDWKNGTYKIISFFAKKARGRMSAYIIKNQITDPELIKQFDWDGYQYNSAMSDAGQWVFTRKQ</sequence>
<protein>
    <recommendedName>
        <fullName evidence="1">UPF0246 protein TERTU_4575</fullName>
    </recommendedName>
</protein>
<proteinExistence type="inferred from homology"/>
<evidence type="ECO:0000255" key="1">
    <source>
        <dbReference type="HAMAP-Rule" id="MF_00652"/>
    </source>
</evidence>
<accession>C5BJT4</accession>
<dbReference type="EMBL" id="CP001614">
    <property type="protein sequence ID" value="ACR12841.1"/>
    <property type="molecule type" value="Genomic_DNA"/>
</dbReference>
<dbReference type="RefSeq" id="WP_015818953.1">
    <property type="nucleotide sequence ID" value="NC_012997.1"/>
</dbReference>
<dbReference type="SMR" id="C5BJT4"/>
<dbReference type="STRING" id="377629.TERTU_4575"/>
<dbReference type="KEGG" id="ttu:TERTU_4575"/>
<dbReference type="eggNOG" id="COG3022">
    <property type="taxonomic scope" value="Bacteria"/>
</dbReference>
<dbReference type="HOGENOM" id="CLU_061989_0_0_6"/>
<dbReference type="OrthoDB" id="9777133at2"/>
<dbReference type="Proteomes" id="UP000009080">
    <property type="component" value="Chromosome"/>
</dbReference>
<dbReference type="GO" id="GO:0005829">
    <property type="term" value="C:cytosol"/>
    <property type="evidence" value="ECO:0007669"/>
    <property type="project" value="TreeGrafter"/>
</dbReference>
<dbReference type="GO" id="GO:0033194">
    <property type="term" value="P:response to hydroperoxide"/>
    <property type="evidence" value="ECO:0007669"/>
    <property type="project" value="TreeGrafter"/>
</dbReference>
<dbReference type="HAMAP" id="MF_00652">
    <property type="entry name" value="UPF0246"/>
    <property type="match status" value="1"/>
</dbReference>
<dbReference type="InterPro" id="IPR005583">
    <property type="entry name" value="YaaA"/>
</dbReference>
<dbReference type="NCBIfam" id="NF002541">
    <property type="entry name" value="PRK02101.1-1"/>
    <property type="match status" value="1"/>
</dbReference>
<dbReference type="NCBIfam" id="NF002542">
    <property type="entry name" value="PRK02101.1-3"/>
    <property type="match status" value="1"/>
</dbReference>
<dbReference type="PANTHER" id="PTHR30283:SF4">
    <property type="entry name" value="PEROXIDE STRESS RESISTANCE PROTEIN YAAA"/>
    <property type="match status" value="1"/>
</dbReference>
<dbReference type="PANTHER" id="PTHR30283">
    <property type="entry name" value="PEROXIDE STRESS RESPONSE PROTEIN YAAA"/>
    <property type="match status" value="1"/>
</dbReference>
<dbReference type="Pfam" id="PF03883">
    <property type="entry name" value="H2O2_YaaD"/>
    <property type="match status" value="1"/>
</dbReference>
<name>Y4575_TERTT</name>
<gene>
    <name type="ordered locus">TERTU_4575</name>
</gene>